<dbReference type="EMBL" id="CP000919">
    <property type="protein sequence ID" value="ACO18608.1"/>
    <property type="molecule type" value="Genomic_DNA"/>
</dbReference>
<dbReference type="RefSeq" id="WP_000163026.1">
    <property type="nucleotide sequence ID" value="NC_012466.1"/>
</dbReference>
<dbReference type="SMR" id="C1CFE9"/>
<dbReference type="KEGG" id="sjj:SPJ_1472"/>
<dbReference type="HOGENOM" id="CLU_059558_0_0_9"/>
<dbReference type="Proteomes" id="UP000002206">
    <property type="component" value="Chromosome"/>
</dbReference>
<dbReference type="GO" id="GO:0005524">
    <property type="term" value="F:ATP binding"/>
    <property type="evidence" value="ECO:0007669"/>
    <property type="project" value="UniProtKB-UniRule"/>
</dbReference>
<dbReference type="GO" id="GO:0005525">
    <property type="term" value="F:GTP binding"/>
    <property type="evidence" value="ECO:0007669"/>
    <property type="project" value="UniProtKB-UniRule"/>
</dbReference>
<dbReference type="Gene3D" id="3.40.50.300">
    <property type="entry name" value="P-loop containing nucleotide triphosphate hydrolases"/>
    <property type="match status" value="1"/>
</dbReference>
<dbReference type="HAMAP" id="MF_00636">
    <property type="entry name" value="RapZ_like"/>
    <property type="match status" value="1"/>
</dbReference>
<dbReference type="InterPro" id="IPR027417">
    <property type="entry name" value="P-loop_NTPase"/>
</dbReference>
<dbReference type="InterPro" id="IPR005337">
    <property type="entry name" value="RapZ-like"/>
</dbReference>
<dbReference type="InterPro" id="IPR053930">
    <property type="entry name" value="RapZ-like_N"/>
</dbReference>
<dbReference type="InterPro" id="IPR053931">
    <property type="entry name" value="RapZ_C"/>
</dbReference>
<dbReference type="NCBIfam" id="NF003828">
    <property type="entry name" value="PRK05416.1"/>
    <property type="match status" value="1"/>
</dbReference>
<dbReference type="PANTHER" id="PTHR30448">
    <property type="entry name" value="RNASE ADAPTER PROTEIN RAPZ"/>
    <property type="match status" value="1"/>
</dbReference>
<dbReference type="PANTHER" id="PTHR30448:SF0">
    <property type="entry name" value="RNASE ADAPTER PROTEIN RAPZ"/>
    <property type="match status" value="1"/>
</dbReference>
<dbReference type="Pfam" id="PF22740">
    <property type="entry name" value="PapZ_C"/>
    <property type="match status" value="1"/>
</dbReference>
<dbReference type="Pfam" id="PF03668">
    <property type="entry name" value="RapZ-like_N"/>
    <property type="match status" value="1"/>
</dbReference>
<dbReference type="PIRSF" id="PIRSF005052">
    <property type="entry name" value="P-loopkin"/>
    <property type="match status" value="1"/>
</dbReference>
<dbReference type="SUPFAM" id="SSF52540">
    <property type="entry name" value="P-loop containing nucleoside triphosphate hydrolases"/>
    <property type="match status" value="1"/>
</dbReference>
<sequence length="296" mass="33735">MTKKQLHLVIVTGMSGAGKTVAIQSFEDLGCFTIDNMPPALLPKFLQLVEIKEDNPKLALVVDMRSRSFFSEIQAVLDELENQDGLDFKILFLDAADKELVARYKETRRSHPLAADGRILDGIKLERELLAPLKNMSQNVVDTTELTPRELRKTLAEQFSDQEQAQSFRIEVMSFGFKYGIPIDADLVFDVRFLPNPYYLPELRNQTGVDEPVYDYVMNHPESEDFYQHLLALIEPILPSYQKEGKSVLTIAMGCTGGQHRSVAFAKRLVQDLSKNWSVNEGHRDKDRRKETVNRS</sequence>
<feature type="chain" id="PRO_1000147372" description="Nucleotide-binding protein SPJ_1472">
    <location>
        <begin position="1"/>
        <end position="296"/>
    </location>
</feature>
<feature type="binding site" evidence="1">
    <location>
        <begin position="13"/>
        <end position="20"/>
    </location>
    <ligand>
        <name>ATP</name>
        <dbReference type="ChEBI" id="CHEBI:30616"/>
    </ligand>
</feature>
<feature type="binding site" evidence="1">
    <location>
        <begin position="63"/>
        <end position="66"/>
    </location>
    <ligand>
        <name>GTP</name>
        <dbReference type="ChEBI" id="CHEBI:37565"/>
    </ligand>
</feature>
<accession>C1CFE9</accession>
<reference key="1">
    <citation type="journal article" date="2010" name="Genome Biol.">
        <title>Structure and dynamics of the pan-genome of Streptococcus pneumoniae and closely related species.</title>
        <authorList>
            <person name="Donati C."/>
            <person name="Hiller N.L."/>
            <person name="Tettelin H."/>
            <person name="Muzzi A."/>
            <person name="Croucher N.J."/>
            <person name="Angiuoli S.V."/>
            <person name="Oggioni M."/>
            <person name="Dunning Hotopp J.C."/>
            <person name="Hu F.Z."/>
            <person name="Riley D.R."/>
            <person name="Covacci A."/>
            <person name="Mitchell T.J."/>
            <person name="Bentley S.D."/>
            <person name="Kilian M."/>
            <person name="Ehrlich G.D."/>
            <person name="Rappuoli R."/>
            <person name="Moxon E.R."/>
            <person name="Masignani V."/>
        </authorList>
    </citation>
    <scope>NUCLEOTIDE SEQUENCE [LARGE SCALE GENOMIC DNA]</scope>
    <source>
        <strain>JJA</strain>
    </source>
</reference>
<comment type="function">
    <text evidence="1">Displays ATPase and GTPase activities.</text>
</comment>
<comment type="similarity">
    <text evidence="1">Belongs to the RapZ-like family.</text>
</comment>
<name>Y1472_STRZJ</name>
<gene>
    <name type="ordered locus">SPJ_1472</name>
</gene>
<keyword id="KW-0067">ATP-binding</keyword>
<keyword id="KW-0342">GTP-binding</keyword>
<keyword id="KW-0547">Nucleotide-binding</keyword>
<organism>
    <name type="scientific">Streptococcus pneumoniae (strain JJA)</name>
    <dbReference type="NCBI Taxonomy" id="488222"/>
    <lineage>
        <taxon>Bacteria</taxon>
        <taxon>Bacillati</taxon>
        <taxon>Bacillota</taxon>
        <taxon>Bacilli</taxon>
        <taxon>Lactobacillales</taxon>
        <taxon>Streptococcaceae</taxon>
        <taxon>Streptococcus</taxon>
    </lineage>
</organism>
<protein>
    <recommendedName>
        <fullName evidence="1">Nucleotide-binding protein SPJ_1472</fullName>
    </recommendedName>
</protein>
<proteinExistence type="inferred from homology"/>
<evidence type="ECO:0000255" key="1">
    <source>
        <dbReference type="HAMAP-Rule" id="MF_00636"/>
    </source>
</evidence>